<dbReference type="EC" id="6.1.1.4" evidence="1"/>
<dbReference type="EMBL" id="CP000698">
    <property type="protein sequence ID" value="ABQ27295.1"/>
    <property type="molecule type" value="Genomic_DNA"/>
</dbReference>
<dbReference type="RefSeq" id="WP_011939961.1">
    <property type="nucleotide sequence ID" value="NC_009483.1"/>
</dbReference>
<dbReference type="SMR" id="A5G677"/>
<dbReference type="STRING" id="351605.Gura_3134"/>
<dbReference type="KEGG" id="gur:Gura_3134"/>
<dbReference type="HOGENOM" id="CLU_004427_0_0_7"/>
<dbReference type="OrthoDB" id="9810365at2"/>
<dbReference type="Proteomes" id="UP000006695">
    <property type="component" value="Chromosome"/>
</dbReference>
<dbReference type="GO" id="GO:0005829">
    <property type="term" value="C:cytosol"/>
    <property type="evidence" value="ECO:0007669"/>
    <property type="project" value="TreeGrafter"/>
</dbReference>
<dbReference type="GO" id="GO:0002161">
    <property type="term" value="F:aminoacyl-tRNA deacylase activity"/>
    <property type="evidence" value="ECO:0007669"/>
    <property type="project" value="InterPro"/>
</dbReference>
<dbReference type="GO" id="GO:0005524">
    <property type="term" value="F:ATP binding"/>
    <property type="evidence" value="ECO:0007669"/>
    <property type="project" value="UniProtKB-UniRule"/>
</dbReference>
<dbReference type="GO" id="GO:0004823">
    <property type="term" value="F:leucine-tRNA ligase activity"/>
    <property type="evidence" value="ECO:0007669"/>
    <property type="project" value="UniProtKB-UniRule"/>
</dbReference>
<dbReference type="GO" id="GO:0006429">
    <property type="term" value="P:leucyl-tRNA aminoacylation"/>
    <property type="evidence" value="ECO:0007669"/>
    <property type="project" value="UniProtKB-UniRule"/>
</dbReference>
<dbReference type="CDD" id="cd07958">
    <property type="entry name" value="Anticodon_Ia_Leu_BEm"/>
    <property type="match status" value="1"/>
</dbReference>
<dbReference type="CDD" id="cd00812">
    <property type="entry name" value="LeuRS_core"/>
    <property type="match status" value="1"/>
</dbReference>
<dbReference type="FunFam" id="3.10.20.590:FF:000001">
    <property type="entry name" value="Leucine--tRNA ligase"/>
    <property type="match status" value="1"/>
</dbReference>
<dbReference type="FunFam" id="3.40.50.620:FF:000003">
    <property type="entry name" value="Leucine--tRNA ligase"/>
    <property type="match status" value="1"/>
</dbReference>
<dbReference type="FunFam" id="3.40.50.620:FF:000212">
    <property type="entry name" value="Leucine--tRNA ligase"/>
    <property type="match status" value="1"/>
</dbReference>
<dbReference type="FunFam" id="1.10.730.10:FF:000011">
    <property type="entry name" value="Leucine--tRNA ligase chloroplastic/mitochondrial"/>
    <property type="match status" value="1"/>
</dbReference>
<dbReference type="Gene3D" id="3.10.20.590">
    <property type="match status" value="1"/>
</dbReference>
<dbReference type="Gene3D" id="3.40.50.620">
    <property type="entry name" value="HUPs"/>
    <property type="match status" value="2"/>
</dbReference>
<dbReference type="Gene3D" id="1.10.730.10">
    <property type="entry name" value="Isoleucyl-tRNA Synthetase, Domain 1"/>
    <property type="match status" value="2"/>
</dbReference>
<dbReference type="HAMAP" id="MF_00049_B">
    <property type="entry name" value="Leu_tRNA_synth_B"/>
    <property type="match status" value="1"/>
</dbReference>
<dbReference type="InterPro" id="IPR001412">
    <property type="entry name" value="aa-tRNA-synth_I_CS"/>
</dbReference>
<dbReference type="InterPro" id="IPR002300">
    <property type="entry name" value="aa-tRNA-synth_Ia"/>
</dbReference>
<dbReference type="InterPro" id="IPR002302">
    <property type="entry name" value="Leu-tRNA-ligase"/>
</dbReference>
<dbReference type="InterPro" id="IPR025709">
    <property type="entry name" value="Leu_tRNA-synth_edit"/>
</dbReference>
<dbReference type="InterPro" id="IPR013155">
    <property type="entry name" value="M/V/L/I-tRNA-synth_anticd-bd"/>
</dbReference>
<dbReference type="InterPro" id="IPR015413">
    <property type="entry name" value="Methionyl/Leucyl_tRNA_Synth"/>
</dbReference>
<dbReference type="InterPro" id="IPR014729">
    <property type="entry name" value="Rossmann-like_a/b/a_fold"/>
</dbReference>
<dbReference type="InterPro" id="IPR009080">
    <property type="entry name" value="tRNAsynth_Ia_anticodon-bd"/>
</dbReference>
<dbReference type="InterPro" id="IPR009008">
    <property type="entry name" value="Val/Leu/Ile-tRNA-synth_edit"/>
</dbReference>
<dbReference type="NCBIfam" id="TIGR00396">
    <property type="entry name" value="leuS_bact"/>
    <property type="match status" value="1"/>
</dbReference>
<dbReference type="PANTHER" id="PTHR43740:SF2">
    <property type="entry name" value="LEUCINE--TRNA LIGASE, MITOCHONDRIAL"/>
    <property type="match status" value="1"/>
</dbReference>
<dbReference type="PANTHER" id="PTHR43740">
    <property type="entry name" value="LEUCYL-TRNA SYNTHETASE"/>
    <property type="match status" value="1"/>
</dbReference>
<dbReference type="Pfam" id="PF08264">
    <property type="entry name" value="Anticodon_1"/>
    <property type="match status" value="1"/>
</dbReference>
<dbReference type="Pfam" id="PF00133">
    <property type="entry name" value="tRNA-synt_1"/>
    <property type="match status" value="1"/>
</dbReference>
<dbReference type="Pfam" id="PF13603">
    <property type="entry name" value="tRNA-synt_1_2"/>
    <property type="match status" value="1"/>
</dbReference>
<dbReference type="Pfam" id="PF09334">
    <property type="entry name" value="tRNA-synt_1g"/>
    <property type="match status" value="1"/>
</dbReference>
<dbReference type="PRINTS" id="PR00985">
    <property type="entry name" value="TRNASYNTHLEU"/>
</dbReference>
<dbReference type="SUPFAM" id="SSF47323">
    <property type="entry name" value="Anticodon-binding domain of a subclass of class I aminoacyl-tRNA synthetases"/>
    <property type="match status" value="1"/>
</dbReference>
<dbReference type="SUPFAM" id="SSF52374">
    <property type="entry name" value="Nucleotidylyl transferase"/>
    <property type="match status" value="1"/>
</dbReference>
<dbReference type="SUPFAM" id="SSF50677">
    <property type="entry name" value="ValRS/IleRS/LeuRS editing domain"/>
    <property type="match status" value="1"/>
</dbReference>
<dbReference type="PROSITE" id="PS00178">
    <property type="entry name" value="AA_TRNA_LIGASE_I"/>
    <property type="match status" value="1"/>
</dbReference>
<name>SYL_GEOUR</name>
<sequence length="824" mass="93456">MEEKYLPSRVEEKWQKFWEANKSFRATEDKTREKYYLLEMFPYPSGRIHMGHVRNYSIGDVIARFKRMKGFNVLHPMGWDAFGMPAENAAIQNKSHPAKWTYENIAYMRGQLKKMGLSYDWDRELATCDVDYYKWEQLIFLQMYKKGLAYKKISSVNWCPKCETVLANEQVEDGCCWRCDSNVDQKELEQWSFRITDYAEELLEYTYKLPGWPERVLTMQRNWIGRSTGCEIDFPIEGQMDKIKVFTTRQDTLFGATFMSLAPEHPMALELTTPENMATVAAFIEKVKKTDRIRRTAEDFEKEGVFTGSYCINPVTNRRMPVYLANFVLTDYGTGAVMAVPTHDQRDFEFARKYDIPMGVVIQPEGEALDPQTMAEAFTAEGIMVNSGRFDGLKSGAAKEQIADYLEKEGIGKKTVNYRLRDWGISRQRYWGNPIPMIYCDLCGAVPVPETDLPVVLPMDATFTGEGGNPLDKVDSFVNTTCPQCGEAARRETDTMDTFVESSWYFLRYCCPDFVSGPLDKEKTEYWMSVDQYIGGIEHAVMHLLYARFFTKVLRDLGYCDIDEPFTNLLTQGMVIKDGAKMSKSKGNVVDPNALIDKYGADTARLFSLFAAPPEKDLDWSDQGVDGSFRFLNRVWKLVYDTLPIIGGAGALDPAGLTNEGKGLRRQVHKTIRKVTEDIEERFHFNTAIAATMELVNTIQSFEPKNSPQNAPVLKEAIESVVMLLAPFVPHFTEELWAQLGNNKSLEQAGWPAFDSAAAIDEELLVVVQVNGKLRGKLTVAVTASEDDVKGAALADERVKPFIEGKSVKKIVYVPGKLVNIVVG</sequence>
<evidence type="ECO:0000255" key="1">
    <source>
        <dbReference type="HAMAP-Rule" id="MF_00049"/>
    </source>
</evidence>
<keyword id="KW-0030">Aminoacyl-tRNA synthetase</keyword>
<keyword id="KW-0067">ATP-binding</keyword>
<keyword id="KW-0963">Cytoplasm</keyword>
<keyword id="KW-0436">Ligase</keyword>
<keyword id="KW-0547">Nucleotide-binding</keyword>
<keyword id="KW-0648">Protein biosynthesis</keyword>
<keyword id="KW-1185">Reference proteome</keyword>
<gene>
    <name evidence="1" type="primary">leuS</name>
    <name type="ordered locus">Gura_3134</name>
</gene>
<protein>
    <recommendedName>
        <fullName evidence="1">Leucine--tRNA ligase</fullName>
        <ecNumber evidence="1">6.1.1.4</ecNumber>
    </recommendedName>
    <alternativeName>
        <fullName evidence="1">Leucyl-tRNA synthetase</fullName>
        <shortName evidence="1">LeuRS</shortName>
    </alternativeName>
</protein>
<feature type="chain" id="PRO_1000074835" description="Leucine--tRNA ligase">
    <location>
        <begin position="1"/>
        <end position="824"/>
    </location>
</feature>
<feature type="short sequence motif" description="'HIGH' region">
    <location>
        <begin position="42"/>
        <end position="52"/>
    </location>
</feature>
<feature type="short sequence motif" description="'KMSKS' region">
    <location>
        <begin position="581"/>
        <end position="585"/>
    </location>
</feature>
<feature type="binding site" evidence="1">
    <location>
        <position position="584"/>
    </location>
    <ligand>
        <name>ATP</name>
        <dbReference type="ChEBI" id="CHEBI:30616"/>
    </ligand>
</feature>
<reference key="1">
    <citation type="submission" date="2007-05" db="EMBL/GenBank/DDBJ databases">
        <title>Complete sequence of Geobacter uraniireducens Rf4.</title>
        <authorList>
            <consortium name="US DOE Joint Genome Institute"/>
            <person name="Copeland A."/>
            <person name="Lucas S."/>
            <person name="Lapidus A."/>
            <person name="Barry K."/>
            <person name="Detter J.C."/>
            <person name="Glavina del Rio T."/>
            <person name="Hammon N."/>
            <person name="Israni S."/>
            <person name="Dalin E."/>
            <person name="Tice H."/>
            <person name="Pitluck S."/>
            <person name="Chertkov O."/>
            <person name="Brettin T."/>
            <person name="Bruce D."/>
            <person name="Han C."/>
            <person name="Schmutz J."/>
            <person name="Larimer F."/>
            <person name="Land M."/>
            <person name="Hauser L."/>
            <person name="Kyrpides N."/>
            <person name="Mikhailova N."/>
            <person name="Shelobolina E."/>
            <person name="Aklujkar M."/>
            <person name="Lovley D."/>
            <person name="Richardson P."/>
        </authorList>
    </citation>
    <scope>NUCLEOTIDE SEQUENCE [LARGE SCALE GENOMIC DNA]</scope>
    <source>
        <strain>ATCC BAA-1134 / JCM 13001 / Rf4</strain>
    </source>
</reference>
<proteinExistence type="inferred from homology"/>
<organism>
    <name type="scientific">Geotalea uraniireducens (strain Rf4)</name>
    <name type="common">Geobacter uraniireducens</name>
    <dbReference type="NCBI Taxonomy" id="351605"/>
    <lineage>
        <taxon>Bacteria</taxon>
        <taxon>Pseudomonadati</taxon>
        <taxon>Thermodesulfobacteriota</taxon>
        <taxon>Desulfuromonadia</taxon>
        <taxon>Geobacterales</taxon>
        <taxon>Geobacteraceae</taxon>
        <taxon>Geotalea</taxon>
    </lineage>
</organism>
<comment type="catalytic activity">
    <reaction evidence="1">
        <text>tRNA(Leu) + L-leucine + ATP = L-leucyl-tRNA(Leu) + AMP + diphosphate</text>
        <dbReference type="Rhea" id="RHEA:11688"/>
        <dbReference type="Rhea" id="RHEA-COMP:9613"/>
        <dbReference type="Rhea" id="RHEA-COMP:9622"/>
        <dbReference type="ChEBI" id="CHEBI:30616"/>
        <dbReference type="ChEBI" id="CHEBI:33019"/>
        <dbReference type="ChEBI" id="CHEBI:57427"/>
        <dbReference type="ChEBI" id="CHEBI:78442"/>
        <dbReference type="ChEBI" id="CHEBI:78494"/>
        <dbReference type="ChEBI" id="CHEBI:456215"/>
        <dbReference type="EC" id="6.1.1.4"/>
    </reaction>
</comment>
<comment type="subcellular location">
    <subcellularLocation>
        <location evidence="1">Cytoplasm</location>
    </subcellularLocation>
</comment>
<comment type="similarity">
    <text evidence="1">Belongs to the class-I aminoacyl-tRNA synthetase family.</text>
</comment>
<accession>A5G677</accession>